<protein>
    <recommendedName>
        <fullName evidence="1">Phosphoribosylformylglycinamidine synthase subunit PurL</fullName>
        <shortName evidence="1">FGAM synthase</shortName>
        <ecNumber evidence="1">6.3.5.3</ecNumber>
    </recommendedName>
    <alternativeName>
        <fullName evidence="1">Formylglycinamide ribonucleotide amidotransferase subunit II</fullName>
        <shortName evidence="1">FGAR amidotransferase II</shortName>
        <shortName evidence="1">FGAR-AT II</shortName>
    </alternativeName>
    <alternativeName>
        <fullName evidence="1">Glutamine amidotransferase PurL</fullName>
    </alternativeName>
    <alternativeName>
        <fullName evidence="1">Phosphoribosylformylglycinamidine synthase subunit II</fullName>
    </alternativeName>
</protein>
<sequence length="740" mass="79148">MTISNTRDITPELIEAHGLKPDEYQRILELIGREPTFTELGIFSAMWNEHCSYKSSKKWLRTLPTSGPRVIQGPGENAGVVDIGDGDCVVFKMESHNHPSYIEPYQGAATGVGGILRDVFTMGARPVAAMNALRFGEPDHPKTRHLVSGVVSGVGGYGNAFGVPTVGGEVNFDKRYNGNILVNAFAAGLARHDGIFLSEAEGVGLPVVYLGAKTSRDGVGGATMASAEFDESIEEKRPTVQVGDPFTEKCLLEACLELMASGAVIAIQDMGAAGLTCSAVEMGAKGDLGIELILDHVPVREENMTAYEMMLSESQERMLMVLKPEKEAEAQAIFRKWGLDFAIVGKTTDDLRFRVIHQGEEVANLPIKDLGDEAPEYDRPWMEPGKHAPLPASNVPQVEDYSAALLKLIGSPDLSSRRWVYEQYDTLIQGNSLQVPGGDAGVIRVEGHETKALAFSSDVTPRYCEADPFEGGKQAVAECWRNITATGAEPLASTDNLNFGNPEKPEIMGQLVKAIEGIGEACRALDFPIVSGNVSLYNETNGQAILPTPTIAGVGLLPDWSQMAKIGGMQDGDTLVLLGGDGTHLGQSVYLRDLFDRADGPAPFVDLALEKRNGEFVRSAIRNGQVTACHDLSDGGLAIAVAEMAIKSGKGATLDAGDGLPHALLFGEDQARYVISATPEMAKLIALNAEGAGVPFRILGTVGGDRLKISKNVDVSVADLTQAYEGWFPNFMNGELTGNN</sequence>
<name>PURL_BRUAB</name>
<feature type="chain" id="PRO_0000236648" description="Phosphoribosylformylglycinamidine synthase subunit PurL">
    <location>
        <begin position="1"/>
        <end position="740"/>
    </location>
</feature>
<feature type="active site" evidence="1">
    <location>
        <position position="50"/>
    </location>
</feature>
<feature type="active site" description="Proton acceptor" evidence="1">
    <location>
        <position position="96"/>
    </location>
</feature>
<feature type="binding site" evidence="1">
    <location>
        <position position="53"/>
    </location>
    <ligand>
        <name>ATP</name>
        <dbReference type="ChEBI" id="CHEBI:30616"/>
    </ligand>
</feature>
<feature type="binding site" evidence="1">
    <location>
        <position position="92"/>
    </location>
    <ligand>
        <name>ATP</name>
        <dbReference type="ChEBI" id="CHEBI:30616"/>
    </ligand>
</feature>
<feature type="binding site" evidence="1">
    <location>
        <position position="94"/>
    </location>
    <ligand>
        <name>Mg(2+)</name>
        <dbReference type="ChEBI" id="CHEBI:18420"/>
        <label>1</label>
    </ligand>
</feature>
<feature type="binding site" evidence="1">
    <location>
        <begin position="95"/>
        <end position="98"/>
    </location>
    <ligand>
        <name>substrate</name>
    </ligand>
</feature>
<feature type="binding site" evidence="1">
    <location>
        <position position="117"/>
    </location>
    <ligand>
        <name>substrate</name>
    </ligand>
</feature>
<feature type="binding site" evidence="1">
    <location>
        <position position="118"/>
    </location>
    <ligand>
        <name>Mg(2+)</name>
        <dbReference type="ChEBI" id="CHEBI:18420"/>
        <label>2</label>
    </ligand>
</feature>
<feature type="binding site" evidence="1">
    <location>
        <position position="241"/>
    </location>
    <ligand>
        <name>substrate</name>
    </ligand>
</feature>
<feature type="binding site" evidence="1">
    <location>
        <position position="269"/>
    </location>
    <ligand>
        <name>Mg(2+)</name>
        <dbReference type="ChEBI" id="CHEBI:18420"/>
        <label>2</label>
    </ligand>
</feature>
<feature type="binding site" evidence="1">
    <location>
        <begin position="313"/>
        <end position="315"/>
    </location>
    <ligand>
        <name>substrate</name>
    </ligand>
</feature>
<feature type="binding site" evidence="1">
    <location>
        <position position="495"/>
    </location>
    <ligand>
        <name>ATP</name>
        <dbReference type="ChEBI" id="CHEBI:30616"/>
    </ligand>
</feature>
<feature type="binding site" evidence="1">
    <location>
        <position position="532"/>
    </location>
    <ligand>
        <name>ATP</name>
        <dbReference type="ChEBI" id="CHEBI:30616"/>
    </ligand>
</feature>
<feature type="binding site" evidence="1">
    <location>
        <position position="533"/>
    </location>
    <ligand>
        <name>Mg(2+)</name>
        <dbReference type="ChEBI" id="CHEBI:18420"/>
        <label>1</label>
    </ligand>
</feature>
<feature type="binding site" evidence="1">
    <location>
        <position position="535"/>
    </location>
    <ligand>
        <name>substrate</name>
    </ligand>
</feature>
<organism>
    <name type="scientific">Brucella abortus biovar 1 (strain 9-941)</name>
    <dbReference type="NCBI Taxonomy" id="262698"/>
    <lineage>
        <taxon>Bacteria</taxon>
        <taxon>Pseudomonadati</taxon>
        <taxon>Pseudomonadota</taxon>
        <taxon>Alphaproteobacteria</taxon>
        <taxon>Hyphomicrobiales</taxon>
        <taxon>Brucellaceae</taxon>
        <taxon>Brucella/Ochrobactrum group</taxon>
        <taxon>Brucella</taxon>
    </lineage>
</organism>
<evidence type="ECO:0000255" key="1">
    <source>
        <dbReference type="HAMAP-Rule" id="MF_00420"/>
    </source>
</evidence>
<keyword id="KW-0067">ATP-binding</keyword>
<keyword id="KW-0963">Cytoplasm</keyword>
<keyword id="KW-0436">Ligase</keyword>
<keyword id="KW-0460">Magnesium</keyword>
<keyword id="KW-0479">Metal-binding</keyword>
<keyword id="KW-0547">Nucleotide-binding</keyword>
<keyword id="KW-0658">Purine biosynthesis</keyword>
<comment type="function">
    <text evidence="1">Part of the phosphoribosylformylglycinamidine synthase complex involved in the purines biosynthetic pathway. Catalyzes the ATP-dependent conversion of formylglycinamide ribonucleotide (FGAR) and glutamine to yield formylglycinamidine ribonucleotide (FGAM) and glutamate. The FGAM synthase complex is composed of three subunits. PurQ produces an ammonia molecule by converting glutamine to glutamate. PurL transfers the ammonia molecule to FGAR to form FGAM in an ATP-dependent manner. PurS interacts with PurQ and PurL and is thought to assist in the transfer of the ammonia molecule from PurQ to PurL.</text>
</comment>
<comment type="catalytic activity">
    <reaction evidence="1">
        <text>N(2)-formyl-N(1)-(5-phospho-beta-D-ribosyl)glycinamide + L-glutamine + ATP + H2O = 2-formamido-N(1)-(5-O-phospho-beta-D-ribosyl)acetamidine + L-glutamate + ADP + phosphate + H(+)</text>
        <dbReference type="Rhea" id="RHEA:17129"/>
        <dbReference type="ChEBI" id="CHEBI:15377"/>
        <dbReference type="ChEBI" id="CHEBI:15378"/>
        <dbReference type="ChEBI" id="CHEBI:29985"/>
        <dbReference type="ChEBI" id="CHEBI:30616"/>
        <dbReference type="ChEBI" id="CHEBI:43474"/>
        <dbReference type="ChEBI" id="CHEBI:58359"/>
        <dbReference type="ChEBI" id="CHEBI:147286"/>
        <dbReference type="ChEBI" id="CHEBI:147287"/>
        <dbReference type="ChEBI" id="CHEBI:456216"/>
        <dbReference type="EC" id="6.3.5.3"/>
    </reaction>
</comment>
<comment type="pathway">
    <text evidence="1">Purine metabolism; IMP biosynthesis via de novo pathway; 5-amino-1-(5-phospho-D-ribosyl)imidazole from N(2)-formyl-N(1)-(5-phospho-D-ribosyl)glycinamide: step 1/2.</text>
</comment>
<comment type="subunit">
    <text evidence="1">Monomer. Part of the FGAM synthase complex composed of 1 PurL, 1 PurQ and 2 PurS subunits.</text>
</comment>
<comment type="subcellular location">
    <subcellularLocation>
        <location evidence="1">Cytoplasm</location>
    </subcellularLocation>
</comment>
<comment type="similarity">
    <text evidence="1">Belongs to the FGAMS family.</text>
</comment>
<accession>Q57DR8</accession>
<proteinExistence type="inferred from homology"/>
<dbReference type="EC" id="6.3.5.3" evidence="1"/>
<dbReference type="EMBL" id="AE017223">
    <property type="protein sequence ID" value="AAX74216.1"/>
    <property type="molecule type" value="Genomic_DNA"/>
</dbReference>
<dbReference type="RefSeq" id="WP_002966777.1">
    <property type="nucleotide sequence ID" value="NC_006932.1"/>
</dbReference>
<dbReference type="SMR" id="Q57DR8"/>
<dbReference type="EnsemblBacteria" id="AAX74216">
    <property type="protein sequence ID" value="AAX74216"/>
    <property type="gene ID" value="BruAb1_0850"/>
</dbReference>
<dbReference type="GeneID" id="93016781"/>
<dbReference type="KEGG" id="bmb:BruAb1_0850"/>
<dbReference type="HOGENOM" id="CLU_003100_0_1_5"/>
<dbReference type="UniPathway" id="UPA00074">
    <property type="reaction ID" value="UER00128"/>
</dbReference>
<dbReference type="PRO" id="PR:Q57DR8"/>
<dbReference type="Proteomes" id="UP000000540">
    <property type="component" value="Chromosome I"/>
</dbReference>
<dbReference type="GO" id="GO:0005737">
    <property type="term" value="C:cytoplasm"/>
    <property type="evidence" value="ECO:0007669"/>
    <property type="project" value="UniProtKB-SubCell"/>
</dbReference>
<dbReference type="GO" id="GO:0005524">
    <property type="term" value="F:ATP binding"/>
    <property type="evidence" value="ECO:0007669"/>
    <property type="project" value="UniProtKB-UniRule"/>
</dbReference>
<dbReference type="GO" id="GO:0000287">
    <property type="term" value="F:magnesium ion binding"/>
    <property type="evidence" value="ECO:0007669"/>
    <property type="project" value="UniProtKB-UniRule"/>
</dbReference>
<dbReference type="GO" id="GO:0004642">
    <property type="term" value="F:phosphoribosylformylglycinamidine synthase activity"/>
    <property type="evidence" value="ECO:0007669"/>
    <property type="project" value="UniProtKB-UniRule"/>
</dbReference>
<dbReference type="GO" id="GO:0006189">
    <property type="term" value="P:'de novo' IMP biosynthetic process"/>
    <property type="evidence" value="ECO:0007669"/>
    <property type="project" value="UniProtKB-UniRule"/>
</dbReference>
<dbReference type="CDD" id="cd02203">
    <property type="entry name" value="PurL_repeat1"/>
    <property type="match status" value="1"/>
</dbReference>
<dbReference type="CDD" id="cd02204">
    <property type="entry name" value="PurL_repeat2"/>
    <property type="match status" value="1"/>
</dbReference>
<dbReference type="FunFam" id="3.30.1330.10:FF:000004">
    <property type="entry name" value="Phosphoribosylformylglycinamidine synthase subunit PurL"/>
    <property type="match status" value="1"/>
</dbReference>
<dbReference type="Gene3D" id="3.90.650.10">
    <property type="entry name" value="PurM-like C-terminal domain"/>
    <property type="match status" value="2"/>
</dbReference>
<dbReference type="Gene3D" id="3.30.1330.10">
    <property type="entry name" value="PurM-like, N-terminal domain"/>
    <property type="match status" value="2"/>
</dbReference>
<dbReference type="HAMAP" id="MF_00420">
    <property type="entry name" value="PurL_2"/>
    <property type="match status" value="1"/>
</dbReference>
<dbReference type="InterPro" id="IPR010074">
    <property type="entry name" value="PRibForGlyAmidine_synth_PurL"/>
</dbReference>
<dbReference type="InterPro" id="IPR041609">
    <property type="entry name" value="PurL_linker"/>
</dbReference>
<dbReference type="InterPro" id="IPR010918">
    <property type="entry name" value="PurM-like_C_dom"/>
</dbReference>
<dbReference type="InterPro" id="IPR036676">
    <property type="entry name" value="PurM-like_C_sf"/>
</dbReference>
<dbReference type="InterPro" id="IPR016188">
    <property type="entry name" value="PurM-like_N"/>
</dbReference>
<dbReference type="InterPro" id="IPR036921">
    <property type="entry name" value="PurM-like_N_sf"/>
</dbReference>
<dbReference type="NCBIfam" id="TIGR01736">
    <property type="entry name" value="FGAM_synth_II"/>
    <property type="match status" value="1"/>
</dbReference>
<dbReference type="NCBIfam" id="NF002290">
    <property type="entry name" value="PRK01213.1"/>
    <property type="match status" value="1"/>
</dbReference>
<dbReference type="PANTHER" id="PTHR43555">
    <property type="entry name" value="PHOSPHORIBOSYLFORMYLGLYCINAMIDINE SYNTHASE SUBUNIT PURL"/>
    <property type="match status" value="1"/>
</dbReference>
<dbReference type="PANTHER" id="PTHR43555:SF1">
    <property type="entry name" value="PHOSPHORIBOSYLFORMYLGLYCINAMIDINE SYNTHASE SUBUNIT PURL"/>
    <property type="match status" value="1"/>
</dbReference>
<dbReference type="Pfam" id="PF00586">
    <property type="entry name" value="AIRS"/>
    <property type="match status" value="2"/>
</dbReference>
<dbReference type="Pfam" id="PF02769">
    <property type="entry name" value="AIRS_C"/>
    <property type="match status" value="2"/>
</dbReference>
<dbReference type="Pfam" id="PF18072">
    <property type="entry name" value="FGAR-AT_linker"/>
    <property type="match status" value="1"/>
</dbReference>
<dbReference type="PIRSF" id="PIRSF001587">
    <property type="entry name" value="FGAM_synthase_II"/>
    <property type="match status" value="1"/>
</dbReference>
<dbReference type="SUPFAM" id="SSF56042">
    <property type="entry name" value="PurM C-terminal domain-like"/>
    <property type="match status" value="2"/>
</dbReference>
<dbReference type="SUPFAM" id="SSF55326">
    <property type="entry name" value="PurM N-terminal domain-like"/>
    <property type="match status" value="2"/>
</dbReference>
<reference key="1">
    <citation type="journal article" date="2005" name="J. Bacteriol.">
        <title>Completion of the genome sequence of Brucella abortus and comparison to the highly similar genomes of Brucella melitensis and Brucella suis.</title>
        <authorList>
            <person name="Halling S.M."/>
            <person name="Peterson-Burch B.D."/>
            <person name="Bricker B.J."/>
            <person name="Zuerner R.L."/>
            <person name="Qing Z."/>
            <person name="Li L.-L."/>
            <person name="Kapur V."/>
            <person name="Alt D.P."/>
            <person name="Olsen S.C."/>
        </authorList>
    </citation>
    <scope>NUCLEOTIDE SEQUENCE [LARGE SCALE GENOMIC DNA]</scope>
    <source>
        <strain>9-941</strain>
    </source>
</reference>
<gene>
    <name evidence="1" type="primary">purL</name>
    <name type="ordered locus">BruAb1_0850</name>
</gene>